<comment type="similarity">
    <text evidence="1">Belongs to the UPF0223 family.</text>
</comment>
<gene>
    <name type="ordered locus">BCG9842_B1176</name>
</gene>
<proteinExistence type="inferred from homology"/>
<accession>B7IVJ8</accession>
<feature type="chain" id="PRO_1000136024" description="UPF0223 protein BCG9842_B1176">
    <location>
        <begin position="1"/>
        <end position="89"/>
    </location>
</feature>
<evidence type="ECO:0000255" key="1">
    <source>
        <dbReference type="HAMAP-Rule" id="MF_01041"/>
    </source>
</evidence>
<dbReference type="EMBL" id="CP001186">
    <property type="protein sequence ID" value="ACK97642.1"/>
    <property type="molecule type" value="Genomic_DNA"/>
</dbReference>
<dbReference type="RefSeq" id="WP_000456553.1">
    <property type="nucleotide sequence ID" value="NC_011772.1"/>
</dbReference>
<dbReference type="SMR" id="B7IVJ8"/>
<dbReference type="KEGG" id="bcg:BCG9842_B1176"/>
<dbReference type="HOGENOM" id="CLU_166693_0_0_9"/>
<dbReference type="Proteomes" id="UP000006744">
    <property type="component" value="Chromosome"/>
</dbReference>
<dbReference type="Gene3D" id="1.10.220.80">
    <property type="entry name" value="BH2638-like"/>
    <property type="match status" value="1"/>
</dbReference>
<dbReference type="HAMAP" id="MF_01041">
    <property type="entry name" value="UPF0223"/>
    <property type="match status" value="1"/>
</dbReference>
<dbReference type="InterPro" id="IPR023324">
    <property type="entry name" value="BH2638-like_sf"/>
</dbReference>
<dbReference type="InterPro" id="IPR007920">
    <property type="entry name" value="UPF0223"/>
</dbReference>
<dbReference type="NCBIfam" id="NF003353">
    <property type="entry name" value="PRK04387.1"/>
    <property type="match status" value="1"/>
</dbReference>
<dbReference type="Pfam" id="PF05256">
    <property type="entry name" value="UPF0223"/>
    <property type="match status" value="1"/>
</dbReference>
<dbReference type="PIRSF" id="PIRSF037260">
    <property type="entry name" value="UPF0223"/>
    <property type="match status" value="1"/>
</dbReference>
<dbReference type="SUPFAM" id="SSF158504">
    <property type="entry name" value="BH2638-like"/>
    <property type="match status" value="1"/>
</dbReference>
<protein>
    <recommendedName>
        <fullName evidence="1">UPF0223 protein BCG9842_B1176</fullName>
    </recommendedName>
</protein>
<sequence>MEYQYPLDYDWSNEEMVTIVKFYEAIEKAYEKGIIREELMGLYRRFKEIVPSKAEEKKIDKEFQEVSGYSIYRAIQRAKEVEEQKVVKI</sequence>
<reference key="1">
    <citation type="submission" date="2008-10" db="EMBL/GenBank/DDBJ databases">
        <title>Genome sequence of Bacillus cereus G9842.</title>
        <authorList>
            <person name="Dodson R.J."/>
            <person name="Durkin A.S."/>
            <person name="Rosovitz M.J."/>
            <person name="Rasko D.A."/>
            <person name="Hoffmaster A."/>
            <person name="Ravel J."/>
            <person name="Sutton G."/>
        </authorList>
    </citation>
    <scope>NUCLEOTIDE SEQUENCE [LARGE SCALE GENOMIC DNA]</scope>
    <source>
        <strain>G9842</strain>
    </source>
</reference>
<name>Y1176_BACC2</name>
<organism>
    <name type="scientific">Bacillus cereus (strain G9842)</name>
    <dbReference type="NCBI Taxonomy" id="405531"/>
    <lineage>
        <taxon>Bacteria</taxon>
        <taxon>Bacillati</taxon>
        <taxon>Bacillota</taxon>
        <taxon>Bacilli</taxon>
        <taxon>Bacillales</taxon>
        <taxon>Bacillaceae</taxon>
        <taxon>Bacillus</taxon>
        <taxon>Bacillus cereus group</taxon>
    </lineage>
</organism>